<reference key="1">
    <citation type="journal article" date="1997" name="Biochim. Biophys. Acta">
        <title>Nucleotide sequence of a gene cluster encoding NusG and the L11-L1-L10-L12 ribosomal proteins from the thermophilic archaeon Sulfolobus solfataricus.</title>
        <authorList>
            <person name="Geiger M."/>
            <person name="Groebner P."/>
            <person name="Piendl W."/>
        </authorList>
    </citation>
    <scope>NUCLEOTIDE SEQUENCE [GENOMIC DNA]</scope>
</reference>
<reference key="2">
    <citation type="journal article" date="2001" name="Proc. Natl. Acad. Sci. U.S.A.">
        <title>The complete genome of the crenarchaeon Sulfolobus solfataricus P2.</title>
        <authorList>
            <person name="She Q."/>
            <person name="Singh R.K."/>
            <person name="Confalonieri F."/>
            <person name="Zivanovic Y."/>
            <person name="Allard G."/>
            <person name="Awayez M.J."/>
            <person name="Chan-Weiher C.C.-Y."/>
            <person name="Clausen I.G."/>
            <person name="Curtis B.A."/>
            <person name="De Moors A."/>
            <person name="Erauso G."/>
            <person name="Fletcher C."/>
            <person name="Gordon P.M.K."/>
            <person name="Heikamp-de Jong I."/>
            <person name="Jeffries A.C."/>
            <person name="Kozera C.J."/>
            <person name="Medina N."/>
            <person name="Peng X."/>
            <person name="Thi-Ngoc H.P."/>
            <person name="Redder P."/>
            <person name="Schenk M.E."/>
            <person name="Theriault C."/>
            <person name="Tolstrup N."/>
            <person name="Charlebois R.L."/>
            <person name="Doolittle W.F."/>
            <person name="Duguet M."/>
            <person name="Gaasterland T."/>
            <person name="Garrett R.A."/>
            <person name="Ragan M.A."/>
            <person name="Sensen C.W."/>
            <person name="Van der Oost J."/>
        </authorList>
    </citation>
    <scope>NUCLEOTIDE SEQUENCE [LARGE SCALE GENOMIC DNA]</scope>
    <source>
        <strain>ATCC 35092 / DSM 1617 / JCM 11322 / P2</strain>
    </source>
</reference>
<reference key="3">
    <citation type="journal article" date="1998" name="Eur. J. Biochem.">
        <title>Interaction of ribosomal L1 proteins from mesophilic and thermophilic Archaea and Bacteria with specific L1-binding sites on 23S rRNA and mRNA.</title>
        <authorList>
            <person name="Koehrer C."/>
            <person name="Mayer C."/>
            <person name="Neumair O."/>
            <person name="Groebner P."/>
            <person name="Piendl W."/>
        </authorList>
    </citation>
    <scope>BINDING TO METHANOCOCCUS VANNIELII 23S RRNA AND TO M.VANNIELII L1 MRNA</scope>
</reference>
<organism>
    <name type="scientific">Saccharolobus solfataricus (strain ATCC 35092 / DSM 1617 / JCM 11322 / P2)</name>
    <name type="common">Sulfolobus solfataricus</name>
    <dbReference type="NCBI Taxonomy" id="273057"/>
    <lineage>
        <taxon>Archaea</taxon>
        <taxon>Thermoproteota</taxon>
        <taxon>Thermoprotei</taxon>
        <taxon>Sulfolobales</taxon>
        <taxon>Sulfolobaceae</taxon>
        <taxon>Saccharolobus</taxon>
    </lineage>
</organism>
<name>RL1_SACS2</name>
<sequence>MQIVDRSNLEASLKLALSPENNPKRNFVQSVEIIVTFKEVDMKKGDLKLREIVVLPKPPEKTKKVLVVPTIQQLEYAKKAEPNTILTKEELQKLQGNKRAIKKIARQNDWFLIAPDSMALVGRILGPALGPRGKFPTPLPNTADISEYILRFKRSTLVKTKDQPQTQVFIGTESQQIADLAENALAVLNVIESKGYAQKVRNIYVKTTMGKVVKVELR</sequence>
<accession>P96038</accession>
<dbReference type="EMBL" id="U85262">
    <property type="protein sequence ID" value="AAB99525.1"/>
    <property type="molecule type" value="Genomic_DNA"/>
</dbReference>
<dbReference type="EMBL" id="AE006641">
    <property type="protein sequence ID" value="AAK40674.1"/>
    <property type="molecule type" value="Genomic_DNA"/>
</dbReference>
<dbReference type="PIR" id="C90177">
    <property type="entry name" value="C90177"/>
</dbReference>
<dbReference type="RefSeq" id="WP_009990633.1">
    <property type="nucleotide sequence ID" value="NC_002754.1"/>
</dbReference>
<dbReference type="SMR" id="P96038"/>
<dbReference type="FunCoup" id="P96038">
    <property type="interactions" value="179"/>
</dbReference>
<dbReference type="STRING" id="273057.SSO0345"/>
<dbReference type="PaxDb" id="273057-SSO0345"/>
<dbReference type="EnsemblBacteria" id="AAK40674">
    <property type="protein sequence ID" value="AAK40674"/>
    <property type="gene ID" value="SSO0345"/>
</dbReference>
<dbReference type="KEGG" id="sso:SSO0345"/>
<dbReference type="PATRIC" id="fig|273057.12.peg.335"/>
<dbReference type="eggNOG" id="arCOG04289">
    <property type="taxonomic scope" value="Archaea"/>
</dbReference>
<dbReference type="HOGENOM" id="CLU_062853_4_0_2"/>
<dbReference type="InParanoid" id="P96038"/>
<dbReference type="PhylomeDB" id="P96038"/>
<dbReference type="Proteomes" id="UP000001974">
    <property type="component" value="Chromosome"/>
</dbReference>
<dbReference type="GO" id="GO:0015934">
    <property type="term" value="C:large ribosomal subunit"/>
    <property type="evidence" value="ECO:0007669"/>
    <property type="project" value="InterPro"/>
</dbReference>
<dbReference type="GO" id="GO:0019843">
    <property type="term" value="F:rRNA binding"/>
    <property type="evidence" value="ECO:0007669"/>
    <property type="project" value="UniProtKB-UniRule"/>
</dbReference>
<dbReference type="GO" id="GO:0003735">
    <property type="term" value="F:structural constituent of ribosome"/>
    <property type="evidence" value="ECO:0007669"/>
    <property type="project" value="InterPro"/>
</dbReference>
<dbReference type="GO" id="GO:0000049">
    <property type="term" value="F:tRNA binding"/>
    <property type="evidence" value="ECO:0007669"/>
    <property type="project" value="UniProtKB-KW"/>
</dbReference>
<dbReference type="GO" id="GO:0006417">
    <property type="term" value="P:regulation of translation"/>
    <property type="evidence" value="ECO:0007669"/>
    <property type="project" value="UniProtKB-KW"/>
</dbReference>
<dbReference type="GO" id="GO:0006412">
    <property type="term" value="P:translation"/>
    <property type="evidence" value="ECO:0007669"/>
    <property type="project" value="UniProtKB-UniRule"/>
</dbReference>
<dbReference type="CDD" id="cd00403">
    <property type="entry name" value="Ribosomal_L1"/>
    <property type="match status" value="1"/>
</dbReference>
<dbReference type="FunFam" id="3.40.50.790:FF:000005">
    <property type="entry name" value="50S ribosomal protein L1"/>
    <property type="match status" value="1"/>
</dbReference>
<dbReference type="Gene3D" id="3.30.190.20">
    <property type="match status" value="1"/>
</dbReference>
<dbReference type="Gene3D" id="3.40.50.790">
    <property type="match status" value="1"/>
</dbReference>
<dbReference type="HAMAP" id="MF_01318_A">
    <property type="entry name" value="Ribosomal_uL1_A"/>
    <property type="match status" value="1"/>
</dbReference>
<dbReference type="InterPro" id="IPR002143">
    <property type="entry name" value="Ribosomal_uL1"/>
</dbReference>
<dbReference type="InterPro" id="IPR023674">
    <property type="entry name" value="Ribosomal_uL1-like"/>
</dbReference>
<dbReference type="InterPro" id="IPR028364">
    <property type="entry name" value="Ribosomal_uL1/biogenesis"/>
</dbReference>
<dbReference type="InterPro" id="IPR016095">
    <property type="entry name" value="Ribosomal_uL1_3-a/b-sand"/>
</dbReference>
<dbReference type="InterPro" id="IPR023669">
    <property type="entry name" value="Ribosomal_uL1_arc"/>
</dbReference>
<dbReference type="InterPro" id="IPR023673">
    <property type="entry name" value="Ribosomal_uL1_CS"/>
</dbReference>
<dbReference type="NCBIfam" id="NF003244">
    <property type="entry name" value="PRK04203.1"/>
    <property type="match status" value="1"/>
</dbReference>
<dbReference type="PANTHER" id="PTHR36427">
    <property type="entry name" value="54S RIBOSOMAL PROTEIN L1, MITOCHONDRIAL"/>
    <property type="match status" value="1"/>
</dbReference>
<dbReference type="PANTHER" id="PTHR36427:SF3">
    <property type="entry name" value="LARGE RIBOSOMAL SUBUNIT PROTEIN UL1M"/>
    <property type="match status" value="1"/>
</dbReference>
<dbReference type="Pfam" id="PF00687">
    <property type="entry name" value="Ribosomal_L1"/>
    <property type="match status" value="1"/>
</dbReference>
<dbReference type="PIRSF" id="PIRSF002155">
    <property type="entry name" value="Ribosomal_L1"/>
    <property type="match status" value="1"/>
</dbReference>
<dbReference type="SUPFAM" id="SSF56808">
    <property type="entry name" value="Ribosomal protein L1"/>
    <property type="match status" value="1"/>
</dbReference>
<dbReference type="PROSITE" id="PS01199">
    <property type="entry name" value="RIBOSOMAL_L1"/>
    <property type="match status" value="1"/>
</dbReference>
<proteinExistence type="evidence at protein level"/>
<feature type="chain" id="PRO_0000125813" description="Large ribosomal subunit protein uL1">
    <location>
        <begin position="1"/>
        <end position="218"/>
    </location>
</feature>
<keyword id="KW-1185">Reference proteome</keyword>
<keyword id="KW-0678">Repressor</keyword>
<keyword id="KW-0687">Ribonucleoprotein</keyword>
<keyword id="KW-0689">Ribosomal protein</keyword>
<keyword id="KW-0694">RNA-binding</keyword>
<keyword id="KW-0699">rRNA-binding</keyword>
<keyword id="KW-0810">Translation regulation</keyword>
<keyword id="KW-0820">tRNA-binding</keyword>
<evidence type="ECO:0000250" key="1"/>
<evidence type="ECO:0000255" key="2">
    <source>
        <dbReference type="HAMAP-Rule" id="MF_01318"/>
    </source>
</evidence>
<evidence type="ECO:0000305" key="3"/>
<gene>
    <name evidence="2" type="primary">rpl1</name>
    <name evidence="2" type="synonym">rpl1Ab</name>
    <name type="ordered locus">SSO0345</name>
</gene>
<protein>
    <recommendedName>
        <fullName evidence="2">Large ribosomal subunit protein uL1</fullName>
    </recommendedName>
    <alternativeName>
        <fullName evidence="3">50S ribosomal protein L1</fullName>
    </alternativeName>
</protein>
<comment type="function">
    <text evidence="1 3">Probably involved in E site tRNA release (By similarity). Binds directly to 23S rRNA (Probable).</text>
</comment>
<comment type="function">
    <text evidence="2">Protein L1 is also a translational repressor protein, it controls the translation of its operon by binding to its mRNA.</text>
</comment>
<comment type="subunit">
    <text>Part of the 50S ribosomal subunit.</text>
</comment>
<comment type="similarity">
    <text evidence="2">Belongs to the universal ribosomal protein uL1 family.</text>
</comment>